<geneLocation type="chloroplast"/>
<dbReference type="EC" id="2.1.3.15" evidence="2"/>
<dbReference type="EMBL" id="AP009372">
    <property type="protein sequence ID" value="BAF50295.1"/>
    <property type="molecule type" value="Genomic_DNA"/>
</dbReference>
<dbReference type="RefSeq" id="YP_001123471.1">
    <property type="nucleotide sequence ID" value="NC_009271.1"/>
</dbReference>
<dbReference type="SMR" id="A4QKU0"/>
<dbReference type="GeneID" id="4962643"/>
<dbReference type="UniPathway" id="UPA00655">
    <property type="reaction ID" value="UER00711"/>
</dbReference>
<dbReference type="GO" id="GO:0009317">
    <property type="term" value="C:acetyl-CoA carboxylase complex"/>
    <property type="evidence" value="ECO:0007669"/>
    <property type="project" value="InterPro"/>
</dbReference>
<dbReference type="GO" id="GO:0009570">
    <property type="term" value="C:chloroplast stroma"/>
    <property type="evidence" value="ECO:0007669"/>
    <property type="project" value="UniProtKB-SubCell"/>
</dbReference>
<dbReference type="GO" id="GO:0003989">
    <property type="term" value="F:acetyl-CoA carboxylase activity"/>
    <property type="evidence" value="ECO:0007669"/>
    <property type="project" value="InterPro"/>
</dbReference>
<dbReference type="GO" id="GO:0005524">
    <property type="term" value="F:ATP binding"/>
    <property type="evidence" value="ECO:0007669"/>
    <property type="project" value="UniProtKB-KW"/>
</dbReference>
<dbReference type="GO" id="GO:0016743">
    <property type="term" value="F:carboxyl- or carbamoyltransferase activity"/>
    <property type="evidence" value="ECO:0007669"/>
    <property type="project" value="UniProtKB-UniRule"/>
</dbReference>
<dbReference type="GO" id="GO:0008270">
    <property type="term" value="F:zinc ion binding"/>
    <property type="evidence" value="ECO:0007669"/>
    <property type="project" value="UniProtKB-UniRule"/>
</dbReference>
<dbReference type="GO" id="GO:0006633">
    <property type="term" value="P:fatty acid biosynthetic process"/>
    <property type="evidence" value="ECO:0007669"/>
    <property type="project" value="UniProtKB-KW"/>
</dbReference>
<dbReference type="GO" id="GO:2001295">
    <property type="term" value="P:malonyl-CoA biosynthetic process"/>
    <property type="evidence" value="ECO:0007669"/>
    <property type="project" value="UniProtKB-UniRule"/>
</dbReference>
<dbReference type="Gene3D" id="3.90.226.10">
    <property type="entry name" value="2-enoyl-CoA Hydratase, Chain A, domain 1"/>
    <property type="match status" value="1"/>
</dbReference>
<dbReference type="HAMAP" id="MF_01395">
    <property type="entry name" value="AcetylCoA_CT_beta"/>
    <property type="match status" value="1"/>
</dbReference>
<dbReference type="InterPro" id="IPR034733">
    <property type="entry name" value="AcCoA_carboxyl_beta"/>
</dbReference>
<dbReference type="InterPro" id="IPR000438">
    <property type="entry name" value="Acetyl_CoA_COase_Trfase_b_su"/>
</dbReference>
<dbReference type="InterPro" id="IPR029045">
    <property type="entry name" value="ClpP/crotonase-like_dom_sf"/>
</dbReference>
<dbReference type="InterPro" id="IPR011762">
    <property type="entry name" value="COA_CT_N"/>
</dbReference>
<dbReference type="NCBIfam" id="TIGR00515">
    <property type="entry name" value="accD"/>
    <property type="match status" value="1"/>
</dbReference>
<dbReference type="PANTHER" id="PTHR42995">
    <property type="entry name" value="ACETYL-COENZYME A CARBOXYLASE CARBOXYL TRANSFERASE SUBUNIT BETA, CHLOROPLASTIC"/>
    <property type="match status" value="1"/>
</dbReference>
<dbReference type="PANTHER" id="PTHR42995:SF5">
    <property type="entry name" value="ACETYL-COENZYME A CARBOXYLASE CARBOXYL TRANSFERASE SUBUNIT BETA, CHLOROPLASTIC"/>
    <property type="match status" value="1"/>
</dbReference>
<dbReference type="Pfam" id="PF01039">
    <property type="entry name" value="Carboxyl_trans"/>
    <property type="match status" value="1"/>
</dbReference>
<dbReference type="PRINTS" id="PR01070">
    <property type="entry name" value="ACCCTRFRASEB"/>
</dbReference>
<dbReference type="SUPFAM" id="SSF52096">
    <property type="entry name" value="ClpP/crotonase"/>
    <property type="match status" value="1"/>
</dbReference>
<dbReference type="PROSITE" id="PS50980">
    <property type="entry name" value="COA_CT_NTER"/>
    <property type="match status" value="1"/>
</dbReference>
<evidence type="ECO:0000250" key="1"/>
<evidence type="ECO:0000255" key="2">
    <source>
        <dbReference type="HAMAP-Rule" id="MF_01395"/>
    </source>
</evidence>
<evidence type="ECO:0000255" key="3">
    <source>
        <dbReference type="PROSITE-ProRule" id="PRU01136"/>
    </source>
</evidence>
<reference key="1">
    <citation type="submission" date="2007-03" db="EMBL/GenBank/DDBJ databases">
        <title>Sequencing analysis of Crucihimalaya wallichii chloroplast DNA.</title>
        <authorList>
            <person name="Hosouchi T."/>
            <person name="Tsuruoka H."/>
            <person name="Kotani H."/>
        </authorList>
    </citation>
    <scope>NUCLEOTIDE SEQUENCE [LARGE SCALE GENOMIC DNA]</scope>
</reference>
<sequence length="484" mass="55022">MEKSWFNLMFSKGELESRGELSKAMDSFAPSEKTTISQDRFIYDMDKNFYGWGERSSYSNNVDLLVSSKDIRNFISDDTFFVRDSNKNSYSIYFDIKKKFFEIDNDFSDLEIFFYNYCSSSYLNNRSKGDNDLHYDPYIKDTKYNCTNHINSCIDSYFRSHICIDSNFLSNSKNSNESYIYNFICSESGKIRESKNYKIRTNRNRSNLISSKDFDITQNYNQLWIQCDNCYGLMYKKVKMNVCEQCGHYLKMSSSERIELSIDPGTWNPMDEDMVSADPIKFHSKEEPYKNRIDSAQKTTGLTDAVQTGTGQLNGIPVALGVMDFQFMGGSMGSVVGEKITRLIEYATNQCLPLILVCSSGGARMQEGSLSLMQMAKISSVLCDYQSSKKLFYISILTSPTTGGVTASFGMLGDIIIAEPYAYIAFAGKRVIEQTLKKAVPDGSQAAESLLRKGLLDAIVPRNLLKGVLRELFQLHAFFPLNKN</sequence>
<protein>
    <recommendedName>
        <fullName evidence="2">Acetyl-coenzyme A carboxylase carboxyl transferase subunit beta, chloroplastic</fullName>
        <shortName evidence="2">ACCase subunit beta</shortName>
        <shortName evidence="2">Acetyl-CoA carboxylase carboxyltransferase subunit beta</shortName>
        <ecNumber evidence="2">2.1.3.15</ecNumber>
    </recommendedName>
</protein>
<accession>A4QKU0</accession>
<comment type="function">
    <text evidence="2">Component of the acetyl coenzyme A carboxylase (ACC) complex. Biotin carboxylase (BC) catalyzes the carboxylation of biotin on its carrier protein (BCCP) and then the CO(2) group is transferred by the transcarboxylase to acetyl-CoA to form malonyl-CoA.</text>
</comment>
<comment type="catalytic activity">
    <reaction evidence="2">
        <text>N(6)-carboxybiotinyl-L-lysyl-[protein] + acetyl-CoA = N(6)-biotinyl-L-lysyl-[protein] + malonyl-CoA</text>
        <dbReference type="Rhea" id="RHEA:54728"/>
        <dbReference type="Rhea" id="RHEA-COMP:10505"/>
        <dbReference type="Rhea" id="RHEA-COMP:10506"/>
        <dbReference type="ChEBI" id="CHEBI:57288"/>
        <dbReference type="ChEBI" id="CHEBI:57384"/>
        <dbReference type="ChEBI" id="CHEBI:83144"/>
        <dbReference type="ChEBI" id="CHEBI:83145"/>
        <dbReference type="EC" id="2.1.3.15"/>
    </reaction>
</comment>
<comment type="cofactor">
    <cofactor evidence="2">
        <name>Zn(2+)</name>
        <dbReference type="ChEBI" id="CHEBI:29105"/>
    </cofactor>
    <text evidence="2">Binds 1 zinc ion per subunit.</text>
</comment>
<comment type="pathway">
    <text evidence="2">Lipid metabolism; malonyl-CoA biosynthesis; malonyl-CoA from acetyl-CoA: step 1/1.</text>
</comment>
<comment type="subunit">
    <text evidence="1">Acetyl-CoA carboxylase is a heterohexamer composed of biotin carboxyl carrier protein, biotin carboxylase and 2 subunits each of ACCase subunit alpha and ACCase plastid-coded subunit beta (accD).</text>
</comment>
<comment type="subcellular location">
    <subcellularLocation>
        <location evidence="2">Plastid</location>
        <location evidence="2">Chloroplast stroma</location>
    </subcellularLocation>
</comment>
<comment type="similarity">
    <text evidence="2">Belongs to the AccD/PCCB family.</text>
</comment>
<name>ACCD_CRUWA</name>
<organism>
    <name type="scientific">Crucihimalaya wallichii</name>
    <name type="common">Rock-cress</name>
    <name type="synonym">Arabidopsis campestris</name>
    <dbReference type="NCBI Taxonomy" id="78192"/>
    <lineage>
        <taxon>Eukaryota</taxon>
        <taxon>Viridiplantae</taxon>
        <taxon>Streptophyta</taxon>
        <taxon>Embryophyta</taxon>
        <taxon>Tracheophyta</taxon>
        <taxon>Spermatophyta</taxon>
        <taxon>Magnoliopsida</taxon>
        <taxon>eudicotyledons</taxon>
        <taxon>Gunneridae</taxon>
        <taxon>Pentapetalae</taxon>
        <taxon>rosids</taxon>
        <taxon>malvids</taxon>
        <taxon>Brassicales</taxon>
        <taxon>Brassicaceae</taxon>
        <taxon>Crucihimalayeae</taxon>
        <taxon>Crucihimalaya</taxon>
    </lineage>
</organism>
<feature type="chain" id="PRO_0000359133" description="Acetyl-coenzyme A carboxylase carboxyl transferase subunit beta, chloroplastic">
    <location>
        <begin position="1"/>
        <end position="484"/>
    </location>
</feature>
<feature type="domain" description="CoA carboxyltransferase N-terminal" evidence="3">
    <location>
        <begin position="223"/>
        <end position="484"/>
    </location>
</feature>
<feature type="zinc finger region" description="C4-type" evidence="2">
    <location>
        <begin position="227"/>
        <end position="246"/>
    </location>
</feature>
<feature type="binding site" evidence="2">
    <location>
        <position position="227"/>
    </location>
    <ligand>
        <name>Zn(2+)</name>
        <dbReference type="ChEBI" id="CHEBI:29105"/>
    </ligand>
</feature>
<feature type="binding site" evidence="2">
    <location>
        <position position="230"/>
    </location>
    <ligand>
        <name>Zn(2+)</name>
        <dbReference type="ChEBI" id="CHEBI:29105"/>
    </ligand>
</feature>
<feature type="binding site" evidence="2">
    <location>
        <position position="243"/>
    </location>
    <ligand>
        <name>Zn(2+)</name>
        <dbReference type="ChEBI" id="CHEBI:29105"/>
    </ligand>
</feature>
<feature type="binding site" evidence="2">
    <location>
        <position position="246"/>
    </location>
    <ligand>
        <name>Zn(2+)</name>
        <dbReference type="ChEBI" id="CHEBI:29105"/>
    </ligand>
</feature>
<keyword id="KW-0067">ATP-binding</keyword>
<keyword id="KW-0150">Chloroplast</keyword>
<keyword id="KW-0275">Fatty acid biosynthesis</keyword>
<keyword id="KW-0276">Fatty acid metabolism</keyword>
<keyword id="KW-0444">Lipid biosynthesis</keyword>
<keyword id="KW-0443">Lipid metabolism</keyword>
<keyword id="KW-0479">Metal-binding</keyword>
<keyword id="KW-0547">Nucleotide-binding</keyword>
<keyword id="KW-0934">Plastid</keyword>
<keyword id="KW-0808">Transferase</keyword>
<keyword id="KW-0862">Zinc</keyword>
<keyword id="KW-0863">Zinc-finger</keyword>
<proteinExistence type="inferred from homology"/>
<gene>
    <name evidence="2" type="primary">accD</name>
</gene>